<protein>
    <recommendedName>
        <fullName evidence="1">ATP synthase subunit b</fullName>
    </recommendedName>
    <alternativeName>
        <fullName evidence="1">ATP synthase F(0) sector subunit b</fullName>
    </alternativeName>
    <alternativeName>
        <fullName evidence="1">ATPase subunit I</fullName>
    </alternativeName>
    <alternativeName>
        <fullName evidence="1">F-type ATPase subunit b</fullName>
        <shortName evidence="1">F-ATPase subunit b</shortName>
    </alternativeName>
</protein>
<feature type="chain" id="PRO_0000368605" description="ATP synthase subunit b">
    <location>
        <begin position="1"/>
        <end position="166"/>
    </location>
</feature>
<feature type="transmembrane region" description="Helical" evidence="1">
    <location>
        <begin position="27"/>
        <end position="47"/>
    </location>
</feature>
<feature type="region of interest" description="Disordered" evidence="2">
    <location>
        <begin position="124"/>
        <end position="143"/>
    </location>
</feature>
<dbReference type="EMBL" id="CP000511">
    <property type="protein sequence ID" value="ABM15109.1"/>
    <property type="molecule type" value="Genomic_DNA"/>
</dbReference>
<dbReference type="RefSeq" id="WP_011781487.1">
    <property type="nucleotide sequence ID" value="NC_008726.1"/>
</dbReference>
<dbReference type="SMR" id="A1TD59"/>
<dbReference type="STRING" id="350058.Mvan_4332"/>
<dbReference type="KEGG" id="mva:Mvan_4332"/>
<dbReference type="eggNOG" id="COG0711">
    <property type="taxonomic scope" value="Bacteria"/>
</dbReference>
<dbReference type="HOGENOM" id="CLU_079215_5_2_11"/>
<dbReference type="Proteomes" id="UP000009159">
    <property type="component" value="Chromosome"/>
</dbReference>
<dbReference type="GO" id="GO:0005886">
    <property type="term" value="C:plasma membrane"/>
    <property type="evidence" value="ECO:0007669"/>
    <property type="project" value="UniProtKB-SubCell"/>
</dbReference>
<dbReference type="GO" id="GO:0045259">
    <property type="term" value="C:proton-transporting ATP synthase complex"/>
    <property type="evidence" value="ECO:0007669"/>
    <property type="project" value="UniProtKB-KW"/>
</dbReference>
<dbReference type="GO" id="GO:0046933">
    <property type="term" value="F:proton-transporting ATP synthase activity, rotational mechanism"/>
    <property type="evidence" value="ECO:0007669"/>
    <property type="project" value="UniProtKB-UniRule"/>
</dbReference>
<dbReference type="GO" id="GO:0046961">
    <property type="term" value="F:proton-transporting ATPase activity, rotational mechanism"/>
    <property type="evidence" value="ECO:0007669"/>
    <property type="project" value="TreeGrafter"/>
</dbReference>
<dbReference type="CDD" id="cd06503">
    <property type="entry name" value="ATP-synt_Fo_b"/>
    <property type="match status" value="1"/>
</dbReference>
<dbReference type="Gene3D" id="1.20.5.620">
    <property type="entry name" value="F1F0 ATP synthase subunit B, membrane domain"/>
    <property type="match status" value="1"/>
</dbReference>
<dbReference type="HAMAP" id="MF_01398">
    <property type="entry name" value="ATP_synth_b_bprime"/>
    <property type="match status" value="1"/>
</dbReference>
<dbReference type="InterPro" id="IPR028987">
    <property type="entry name" value="ATP_synth_B-like_membr_sf"/>
</dbReference>
<dbReference type="InterPro" id="IPR002146">
    <property type="entry name" value="ATP_synth_b/b'su_bac/chlpt"/>
</dbReference>
<dbReference type="InterPro" id="IPR050059">
    <property type="entry name" value="ATP_synthase_B_chain"/>
</dbReference>
<dbReference type="NCBIfam" id="NF004412">
    <property type="entry name" value="PRK05759.1-3"/>
    <property type="match status" value="1"/>
</dbReference>
<dbReference type="PANTHER" id="PTHR33445:SF1">
    <property type="entry name" value="ATP SYNTHASE SUBUNIT B"/>
    <property type="match status" value="1"/>
</dbReference>
<dbReference type="PANTHER" id="PTHR33445">
    <property type="entry name" value="ATP SYNTHASE SUBUNIT B', CHLOROPLASTIC"/>
    <property type="match status" value="1"/>
</dbReference>
<dbReference type="Pfam" id="PF00430">
    <property type="entry name" value="ATP-synt_B"/>
    <property type="match status" value="1"/>
</dbReference>
<dbReference type="SUPFAM" id="SSF81573">
    <property type="entry name" value="F1F0 ATP synthase subunit B, membrane domain"/>
    <property type="match status" value="1"/>
</dbReference>
<sequence length="166" mass="17221">MGELTTSIVAAEEGGGTSNFLIPNGTFFVVLLIFLIVLGVIAKWVVPPVSKVLAEREAMLAKTAADNRKSAEQVAAAQADYDKTMADARGEASSIRDEARVAGRQVVDEKRAVASGEVAETVKSADQQLSQQGSAAQSELQSSVDGLSATLASRILGVDVNSGGSR</sequence>
<gene>
    <name evidence="1" type="primary">atpF</name>
    <name type="ordered locus">Mvan_4332</name>
</gene>
<proteinExistence type="inferred from homology"/>
<keyword id="KW-0066">ATP synthesis</keyword>
<keyword id="KW-1003">Cell membrane</keyword>
<keyword id="KW-0138">CF(0)</keyword>
<keyword id="KW-0375">Hydrogen ion transport</keyword>
<keyword id="KW-0406">Ion transport</keyword>
<keyword id="KW-0472">Membrane</keyword>
<keyword id="KW-0812">Transmembrane</keyword>
<keyword id="KW-1133">Transmembrane helix</keyword>
<keyword id="KW-0813">Transport</keyword>
<evidence type="ECO:0000255" key="1">
    <source>
        <dbReference type="HAMAP-Rule" id="MF_01398"/>
    </source>
</evidence>
<evidence type="ECO:0000256" key="2">
    <source>
        <dbReference type="SAM" id="MobiDB-lite"/>
    </source>
</evidence>
<reference key="1">
    <citation type="submission" date="2006-12" db="EMBL/GenBank/DDBJ databases">
        <title>Complete sequence of Mycobacterium vanbaalenii PYR-1.</title>
        <authorList>
            <consortium name="US DOE Joint Genome Institute"/>
            <person name="Copeland A."/>
            <person name="Lucas S."/>
            <person name="Lapidus A."/>
            <person name="Barry K."/>
            <person name="Detter J.C."/>
            <person name="Glavina del Rio T."/>
            <person name="Hammon N."/>
            <person name="Israni S."/>
            <person name="Dalin E."/>
            <person name="Tice H."/>
            <person name="Pitluck S."/>
            <person name="Singan V."/>
            <person name="Schmutz J."/>
            <person name="Larimer F."/>
            <person name="Land M."/>
            <person name="Hauser L."/>
            <person name="Kyrpides N."/>
            <person name="Anderson I.J."/>
            <person name="Miller C."/>
            <person name="Richardson P."/>
        </authorList>
    </citation>
    <scope>NUCLEOTIDE SEQUENCE [LARGE SCALE GENOMIC DNA]</scope>
    <source>
        <strain>DSM 7251 / JCM 13017 / BCRC 16820 / KCTC 9966 / NRRL B-24157 / PYR-1</strain>
    </source>
</reference>
<organism>
    <name type="scientific">Mycolicibacterium vanbaalenii (strain DSM 7251 / JCM 13017 / BCRC 16820 / KCTC 9966 / NRRL B-24157 / PYR-1)</name>
    <name type="common">Mycobacterium vanbaalenii</name>
    <dbReference type="NCBI Taxonomy" id="350058"/>
    <lineage>
        <taxon>Bacteria</taxon>
        <taxon>Bacillati</taxon>
        <taxon>Actinomycetota</taxon>
        <taxon>Actinomycetes</taxon>
        <taxon>Mycobacteriales</taxon>
        <taxon>Mycobacteriaceae</taxon>
        <taxon>Mycolicibacterium</taxon>
    </lineage>
</organism>
<comment type="function">
    <text evidence="1">F(1)F(0) ATP synthase produces ATP from ADP in the presence of a proton or sodium gradient. F-type ATPases consist of two structural domains, F(1) containing the extramembraneous catalytic core and F(0) containing the membrane proton channel, linked together by a central stalk and a peripheral stalk. During catalysis, ATP synthesis in the catalytic domain of F(1) is coupled via a rotary mechanism of the central stalk subunits to proton translocation.</text>
</comment>
<comment type="function">
    <text evidence="1">Component of the F(0) channel, it forms part of the peripheral stalk, linking F(1) to F(0).</text>
</comment>
<comment type="subunit">
    <text evidence="1">F-type ATPases have 2 components, F(1) - the catalytic core - and F(0) - the membrane proton channel. F(1) has five subunits: alpha(3), beta(3), gamma(1), delta(1), epsilon(1). F(0) has three main subunits: a(1), b(2) and c(10-14). The alpha and beta chains form an alternating ring which encloses part of the gamma chain. F(1) is attached to F(0) by a central stalk formed by the gamma and epsilon chains, while a peripheral stalk is formed by the delta and b chains.</text>
</comment>
<comment type="subcellular location">
    <subcellularLocation>
        <location evidence="1">Cell membrane</location>
        <topology evidence="1">Single-pass membrane protein</topology>
    </subcellularLocation>
</comment>
<comment type="similarity">
    <text evidence="1">Belongs to the ATPase B chain family.</text>
</comment>
<name>ATPF_MYCVP</name>
<accession>A1TD59</accession>